<comment type="function">
    <text evidence="1">Chaperone involved in the correct folding and assembly of outer membrane proteins. Recognizes specific patterns of aromatic residues and the orientation of their side chains, which are found more frequently in integral outer membrane proteins. May act in both early periplasmic and late outer membrane-associated steps of protein maturation.</text>
</comment>
<comment type="catalytic activity">
    <reaction evidence="1">
        <text>[protein]-peptidylproline (omega=180) = [protein]-peptidylproline (omega=0)</text>
        <dbReference type="Rhea" id="RHEA:16237"/>
        <dbReference type="Rhea" id="RHEA-COMP:10747"/>
        <dbReference type="Rhea" id="RHEA-COMP:10748"/>
        <dbReference type="ChEBI" id="CHEBI:83833"/>
        <dbReference type="ChEBI" id="CHEBI:83834"/>
        <dbReference type="EC" id="5.2.1.8"/>
    </reaction>
</comment>
<comment type="subcellular location">
    <subcellularLocation>
        <location evidence="1">Periplasm</location>
    </subcellularLocation>
    <text evidence="1">Is capable of associating with the outer membrane.</text>
</comment>
<comment type="domain">
    <text evidence="1">The PPIase activity resides only in the second parvulin domain. The N-terminal region and the C-terminal tail are necessary and sufficient for the chaperone activity of SurA. The PPIase activity is dispensable for SurA to function as a chaperone. The N-terminal region and the C-terminal tail are also required for porin recognition.</text>
</comment>
<comment type="sequence caution" evidence="2">
    <conflict type="erroneous initiation">
        <sequence resource="EMBL-CDS" id="AAU26405"/>
    </conflict>
</comment>
<gene>
    <name evidence="1" type="primary">surA</name>
    <name type="ordered locus">lpg0298</name>
</gene>
<reference key="1">
    <citation type="journal article" date="2004" name="Science">
        <title>The genomic sequence of the accidental pathogen Legionella pneumophila.</title>
        <authorList>
            <person name="Chien M."/>
            <person name="Morozova I."/>
            <person name="Shi S."/>
            <person name="Sheng H."/>
            <person name="Chen J."/>
            <person name="Gomez S.M."/>
            <person name="Asamani G."/>
            <person name="Hill K."/>
            <person name="Nuara J."/>
            <person name="Feder M."/>
            <person name="Rineer J."/>
            <person name="Greenberg J.J."/>
            <person name="Steshenko V."/>
            <person name="Park S.H."/>
            <person name="Zhao B."/>
            <person name="Teplitskaya E."/>
            <person name="Edwards J.R."/>
            <person name="Pampou S."/>
            <person name="Georghiou A."/>
            <person name="Chou I.-C."/>
            <person name="Iannuccilli W."/>
            <person name="Ulz M.E."/>
            <person name="Kim D.H."/>
            <person name="Geringer-Sameth A."/>
            <person name="Goldsberry C."/>
            <person name="Morozov P."/>
            <person name="Fischer S.G."/>
            <person name="Segal G."/>
            <person name="Qu X."/>
            <person name="Rzhetsky A."/>
            <person name="Zhang P."/>
            <person name="Cayanis E."/>
            <person name="De Jong P.J."/>
            <person name="Ju J."/>
            <person name="Kalachikov S."/>
            <person name="Shuman H.A."/>
            <person name="Russo J.J."/>
        </authorList>
    </citation>
    <scope>NUCLEOTIDE SEQUENCE [LARGE SCALE GENOMIC DNA]</scope>
    <source>
        <strain>Philadelphia 1 / ATCC 33152 / DSM 7513</strain>
    </source>
</reference>
<protein>
    <recommendedName>
        <fullName evidence="1">Chaperone SurA</fullName>
    </recommendedName>
    <alternativeName>
        <fullName evidence="1">Peptidyl-prolyl cis-trans isomerase SurA</fullName>
        <shortName evidence="1">PPIase SurA</shortName>
        <ecNumber evidence="1">5.2.1.8</ecNumber>
    </alternativeName>
    <alternativeName>
        <fullName evidence="1">Rotamase SurA</fullName>
    </alternativeName>
</protein>
<organism>
    <name type="scientific">Legionella pneumophila subsp. pneumophila (strain Philadelphia 1 / ATCC 33152 / DSM 7513)</name>
    <dbReference type="NCBI Taxonomy" id="272624"/>
    <lineage>
        <taxon>Bacteria</taxon>
        <taxon>Pseudomonadati</taxon>
        <taxon>Pseudomonadota</taxon>
        <taxon>Gammaproteobacteria</taxon>
        <taxon>Legionellales</taxon>
        <taxon>Legionellaceae</taxon>
        <taxon>Legionella</taxon>
    </lineage>
</organism>
<sequence>MFKRIALVCALFSGVCFAEGKQLLDKVVAIVNDNVITSSELNAQVELSKKQIIAQNMQMPDESVLRKQVLQHLIDVDLEMQMAKQNGITIENAEIDEAIEKIAASNHLNLSQMRDEITKQGISWQEYRQNIRKEMLISRVQQKAVGKDIIVTNEQVEQYLKTSGRIENSNLTYHLKNIVIPLSEEPTTKQLQRAKIEAENLLNKIKKGEDFSRLAIEESSGEFALEGGDLGERHLAELPEVFAKEVVHMKVGQVAGPIRAGNGFHLIKLVAVGGENQRHVITQTHVRHILLKPDASMVPSEAIKQVNNIYRQIQSGKDFALMAKQYSLDAASAVKGGDLGWVNPGELVPEFEKTMNSLPLHKVSKPVKTQYGWHLIEVIARRQKDDSEAFKKQQVRQFLQQRKFVEAVQNWQQHLRSQAYINIVDKDLA</sequence>
<proteinExistence type="inferred from homology"/>
<dbReference type="EC" id="5.2.1.8" evidence="1"/>
<dbReference type="EMBL" id="AE017354">
    <property type="protein sequence ID" value="AAU26405.1"/>
    <property type="status" value="ALT_INIT"/>
    <property type="molecule type" value="Genomic_DNA"/>
</dbReference>
<dbReference type="RefSeq" id="WP_015444876.1">
    <property type="nucleotide sequence ID" value="NC_002942.5"/>
</dbReference>
<dbReference type="RefSeq" id="YP_094352.1">
    <property type="nucleotide sequence ID" value="NC_002942.5"/>
</dbReference>
<dbReference type="SMR" id="Q5ZYR3"/>
<dbReference type="STRING" id="272624.lpg0298"/>
<dbReference type="PaxDb" id="272624-lpg0298"/>
<dbReference type="KEGG" id="lpn:lpg0298"/>
<dbReference type="PATRIC" id="fig|272624.6.peg.318"/>
<dbReference type="eggNOG" id="COG0760">
    <property type="taxonomic scope" value="Bacteria"/>
</dbReference>
<dbReference type="HOGENOM" id="CLU_034646_11_0_6"/>
<dbReference type="OrthoDB" id="14196at2"/>
<dbReference type="Proteomes" id="UP000000609">
    <property type="component" value="Chromosome"/>
</dbReference>
<dbReference type="GO" id="GO:0030288">
    <property type="term" value="C:outer membrane-bounded periplasmic space"/>
    <property type="evidence" value="ECO:0007669"/>
    <property type="project" value="InterPro"/>
</dbReference>
<dbReference type="GO" id="GO:0042277">
    <property type="term" value="F:peptide binding"/>
    <property type="evidence" value="ECO:0007669"/>
    <property type="project" value="InterPro"/>
</dbReference>
<dbReference type="GO" id="GO:0003755">
    <property type="term" value="F:peptidyl-prolyl cis-trans isomerase activity"/>
    <property type="evidence" value="ECO:0007669"/>
    <property type="project" value="UniProtKB-UniRule"/>
</dbReference>
<dbReference type="GO" id="GO:0051082">
    <property type="term" value="F:unfolded protein binding"/>
    <property type="evidence" value="ECO:0007669"/>
    <property type="project" value="UniProtKB-UniRule"/>
</dbReference>
<dbReference type="GO" id="GO:0043165">
    <property type="term" value="P:Gram-negative-bacterium-type cell outer membrane assembly"/>
    <property type="evidence" value="ECO:0007669"/>
    <property type="project" value="InterPro"/>
</dbReference>
<dbReference type="GO" id="GO:0006457">
    <property type="term" value="P:protein folding"/>
    <property type="evidence" value="ECO:0007669"/>
    <property type="project" value="UniProtKB-UniRule"/>
</dbReference>
<dbReference type="GO" id="GO:0050821">
    <property type="term" value="P:protein stabilization"/>
    <property type="evidence" value="ECO:0007669"/>
    <property type="project" value="InterPro"/>
</dbReference>
<dbReference type="Gene3D" id="3.10.50.40">
    <property type="match status" value="2"/>
</dbReference>
<dbReference type="Gene3D" id="1.10.4030.10">
    <property type="entry name" value="Porin chaperone SurA, peptide-binding domain"/>
    <property type="match status" value="1"/>
</dbReference>
<dbReference type="HAMAP" id="MF_01183">
    <property type="entry name" value="Chaperone_SurA"/>
    <property type="match status" value="1"/>
</dbReference>
<dbReference type="InterPro" id="IPR050280">
    <property type="entry name" value="OMP_Chaperone_SurA"/>
</dbReference>
<dbReference type="InterPro" id="IPR046357">
    <property type="entry name" value="PPIase_dom_sf"/>
</dbReference>
<dbReference type="InterPro" id="IPR000297">
    <property type="entry name" value="PPIase_PpiC"/>
</dbReference>
<dbReference type="InterPro" id="IPR023034">
    <property type="entry name" value="PPIase_SurA"/>
</dbReference>
<dbReference type="InterPro" id="IPR015391">
    <property type="entry name" value="SurA_N"/>
</dbReference>
<dbReference type="InterPro" id="IPR027304">
    <property type="entry name" value="Trigger_fact/SurA_dom_sf"/>
</dbReference>
<dbReference type="PANTHER" id="PTHR47637">
    <property type="entry name" value="CHAPERONE SURA"/>
    <property type="match status" value="1"/>
</dbReference>
<dbReference type="PANTHER" id="PTHR47637:SF1">
    <property type="entry name" value="CHAPERONE SURA"/>
    <property type="match status" value="1"/>
</dbReference>
<dbReference type="Pfam" id="PF00639">
    <property type="entry name" value="Rotamase"/>
    <property type="match status" value="1"/>
</dbReference>
<dbReference type="Pfam" id="PF13616">
    <property type="entry name" value="Rotamase_3"/>
    <property type="match status" value="1"/>
</dbReference>
<dbReference type="Pfam" id="PF09312">
    <property type="entry name" value="SurA_N"/>
    <property type="match status" value="1"/>
</dbReference>
<dbReference type="SUPFAM" id="SSF54534">
    <property type="entry name" value="FKBP-like"/>
    <property type="match status" value="2"/>
</dbReference>
<dbReference type="SUPFAM" id="SSF109998">
    <property type="entry name" value="Triger factor/SurA peptide-binding domain-like"/>
    <property type="match status" value="1"/>
</dbReference>
<dbReference type="PROSITE" id="PS50198">
    <property type="entry name" value="PPIC_PPIASE_2"/>
    <property type="match status" value="2"/>
</dbReference>
<accession>Q5ZYR3</accession>
<name>SURA_LEGPH</name>
<keyword id="KW-0143">Chaperone</keyword>
<keyword id="KW-0413">Isomerase</keyword>
<keyword id="KW-0574">Periplasm</keyword>
<keyword id="KW-1185">Reference proteome</keyword>
<keyword id="KW-0677">Repeat</keyword>
<keyword id="KW-0697">Rotamase</keyword>
<keyword id="KW-0732">Signal</keyword>
<feature type="signal peptide" evidence="1">
    <location>
        <begin position="1"/>
        <end position="18"/>
    </location>
</feature>
<feature type="chain" id="PRO_0000270019" description="Chaperone SurA">
    <location>
        <begin position="19"/>
        <end position="429"/>
    </location>
</feature>
<feature type="domain" description="PpiC 1" evidence="1">
    <location>
        <begin position="170"/>
        <end position="271"/>
    </location>
</feature>
<feature type="domain" description="PpiC 2" evidence="1">
    <location>
        <begin position="281"/>
        <end position="380"/>
    </location>
</feature>
<evidence type="ECO:0000255" key="1">
    <source>
        <dbReference type="HAMAP-Rule" id="MF_01183"/>
    </source>
</evidence>
<evidence type="ECO:0000305" key="2"/>